<name>Y529_PSEAB</name>
<reference key="1">
    <citation type="journal article" date="2006" name="Genome Biol.">
        <title>Genomic analysis reveals that Pseudomonas aeruginosa virulence is combinatorial.</title>
        <authorList>
            <person name="Lee D.G."/>
            <person name="Urbach J.M."/>
            <person name="Wu G."/>
            <person name="Liberati N.T."/>
            <person name="Feinbaum R.L."/>
            <person name="Miyata S."/>
            <person name="Diggins L.T."/>
            <person name="He J."/>
            <person name="Saucier M."/>
            <person name="Deziel E."/>
            <person name="Friedman L."/>
            <person name="Li L."/>
            <person name="Grills G."/>
            <person name="Montgomery K."/>
            <person name="Kucherlapati R."/>
            <person name="Rahme L.G."/>
            <person name="Ausubel F.M."/>
        </authorList>
    </citation>
    <scope>NUCLEOTIDE SEQUENCE [LARGE SCALE GENOMIC DNA]</scope>
    <source>
        <strain>UCBPP-PA14</strain>
    </source>
</reference>
<sequence length="189" mass="20186">MKQSSPTYLKHHFLIAMPHMADPNFAQTVTYLVEHNEQGAMGLVINRPSGLNLAEVLEQLKPDALPPARCQHIDIYNGGPVQTDRGFVLHPSGLSYQSTLELGELAMSTSQDVLFAIAAGTGPEKSLISLGYAGWEAGQLEAELSDNAWLTCPADPAILFDLPAEERLSAAAARLGVNLSLLTAQAGHA</sequence>
<dbReference type="EMBL" id="CP000438">
    <property type="protein sequence ID" value="ABJ15372.1"/>
    <property type="molecule type" value="Genomic_DNA"/>
</dbReference>
<dbReference type="RefSeq" id="WP_003084577.1">
    <property type="nucleotide sequence ID" value="NZ_CP034244.1"/>
</dbReference>
<dbReference type="SMR" id="Q02U07"/>
<dbReference type="KEGG" id="pau:PA14_05290"/>
<dbReference type="PseudoCAP" id="PA14_05290"/>
<dbReference type="HOGENOM" id="CLU_057596_1_0_6"/>
<dbReference type="BioCyc" id="PAER208963:G1G74-440-MONOMER"/>
<dbReference type="Proteomes" id="UP000000653">
    <property type="component" value="Chromosome"/>
</dbReference>
<dbReference type="GO" id="GO:0005829">
    <property type="term" value="C:cytosol"/>
    <property type="evidence" value="ECO:0007669"/>
    <property type="project" value="TreeGrafter"/>
</dbReference>
<dbReference type="Gene3D" id="3.40.1740.10">
    <property type="entry name" value="VC0467-like"/>
    <property type="match status" value="1"/>
</dbReference>
<dbReference type="HAMAP" id="MF_00758">
    <property type="entry name" value="UPF0301"/>
    <property type="match status" value="1"/>
</dbReference>
<dbReference type="InterPro" id="IPR003774">
    <property type="entry name" value="AlgH-like"/>
</dbReference>
<dbReference type="NCBIfam" id="NF001266">
    <property type="entry name" value="PRK00228.1-1"/>
    <property type="match status" value="1"/>
</dbReference>
<dbReference type="PANTHER" id="PTHR30327">
    <property type="entry name" value="UNCHARACTERIZED PROTEIN YQGE"/>
    <property type="match status" value="1"/>
</dbReference>
<dbReference type="PANTHER" id="PTHR30327:SF1">
    <property type="entry name" value="UPF0301 PROTEIN YQGE"/>
    <property type="match status" value="1"/>
</dbReference>
<dbReference type="Pfam" id="PF02622">
    <property type="entry name" value="DUF179"/>
    <property type="match status" value="1"/>
</dbReference>
<dbReference type="SUPFAM" id="SSF143456">
    <property type="entry name" value="VC0467-like"/>
    <property type="match status" value="1"/>
</dbReference>
<protein>
    <recommendedName>
        <fullName evidence="1">UPF0301 protein PA14_05290</fullName>
    </recommendedName>
</protein>
<comment type="similarity">
    <text evidence="1">Belongs to the UPF0301 (AlgH) family.</text>
</comment>
<proteinExistence type="inferred from homology"/>
<accession>Q02U07</accession>
<feature type="chain" id="PRO_1000046671" description="UPF0301 protein PA14_05290">
    <location>
        <begin position="1"/>
        <end position="189"/>
    </location>
</feature>
<gene>
    <name type="ordered locus">PA14_05290</name>
</gene>
<organism>
    <name type="scientific">Pseudomonas aeruginosa (strain UCBPP-PA14)</name>
    <dbReference type="NCBI Taxonomy" id="208963"/>
    <lineage>
        <taxon>Bacteria</taxon>
        <taxon>Pseudomonadati</taxon>
        <taxon>Pseudomonadota</taxon>
        <taxon>Gammaproteobacteria</taxon>
        <taxon>Pseudomonadales</taxon>
        <taxon>Pseudomonadaceae</taxon>
        <taxon>Pseudomonas</taxon>
    </lineage>
</organism>
<evidence type="ECO:0000255" key="1">
    <source>
        <dbReference type="HAMAP-Rule" id="MF_00758"/>
    </source>
</evidence>